<evidence type="ECO:0000250" key="1">
    <source>
        <dbReference type="UniProtKB" id="P18847"/>
    </source>
</evidence>
<evidence type="ECO:0000250" key="2">
    <source>
        <dbReference type="UniProtKB" id="Q60765"/>
    </source>
</evidence>
<evidence type="ECO:0000255" key="3">
    <source>
        <dbReference type="PROSITE-ProRule" id="PRU00978"/>
    </source>
</evidence>
<evidence type="ECO:0000256" key="4">
    <source>
        <dbReference type="SAM" id="MobiDB-lite"/>
    </source>
</evidence>
<evidence type="ECO:0000269" key="5">
    <source>
    </source>
</evidence>
<evidence type="ECO:0000269" key="6">
    <source>
    </source>
</evidence>
<evidence type="ECO:0000303" key="7">
    <source>
    </source>
</evidence>
<evidence type="ECO:0000305" key="8"/>
<organism>
    <name type="scientific">Rattus norvegicus</name>
    <name type="common">Rat</name>
    <dbReference type="NCBI Taxonomy" id="10116"/>
    <lineage>
        <taxon>Eukaryota</taxon>
        <taxon>Metazoa</taxon>
        <taxon>Chordata</taxon>
        <taxon>Craniata</taxon>
        <taxon>Vertebrata</taxon>
        <taxon>Euteleostomi</taxon>
        <taxon>Mammalia</taxon>
        <taxon>Eutheria</taxon>
        <taxon>Euarchontoglires</taxon>
        <taxon>Glires</taxon>
        <taxon>Rodentia</taxon>
        <taxon>Myomorpha</taxon>
        <taxon>Muroidea</taxon>
        <taxon>Muridae</taxon>
        <taxon>Murinae</taxon>
        <taxon>Rattus</taxon>
    </lineage>
</organism>
<keyword id="KW-0238">DNA-binding</keyword>
<keyword id="KW-1017">Isopeptide bond</keyword>
<keyword id="KW-0539">Nucleus</keyword>
<keyword id="KW-0597">Phosphoprotein</keyword>
<keyword id="KW-1185">Reference proteome</keyword>
<keyword id="KW-0678">Repressor</keyword>
<keyword id="KW-0804">Transcription</keyword>
<keyword id="KW-0805">Transcription regulation</keyword>
<keyword id="KW-0832">Ubl conjugation</keyword>
<comment type="function">
    <text evidence="1 2">This protein binds the cAMP response element (CRE) (consensus: 5'-GTGACGT[AC][AG]-3'), a sequence present in many viral and cellular promoters. Represses transcription from promoters with ATF sites (By similarity). It may repress transcription by stabilizing the binding of inhibitory cofactors at the promoter (By similarity).</text>
</comment>
<comment type="subunit">
    <text>ATF3 alone can bind DNA, but it preferentially forms heteromeric complexes with JUN and JUNB and does not interact with FOS.</text>
</comment>
<comment type="subcellular location">
    <subcellularLocation>
        <location evidence="3">Nucleus</location>
    </subcellularLocation>
</comment>
<comment type="tissue specificity">
    <text evidence="5 6">Expressed in tissues containing skeletal muscle or smooth muscle (PubMed:1902565). Expressed in cutaneous and muscular sensory neurons (PubMed:19913522).</text>
</comment>
<comment type="induction">
    <text evidence="5 6">Up-regulated in regenerating neurons after nerve injury (PubMed:19913522). Rapidly and highly induced in regenerating liver and mitogen-stimulated cells (PubMed:1902565).</text>
</comment>
<comment type="similarity">
    <text evidence="8">Belongs to the bZIP family. ATF subfamily.</text>
</comment>
<reference key="1">
    <citation type="journal article" date="1991" name="Proc. Natl. Acad. Sci. U.S.A.">
        <title>Identification of LRF-1, a leucine-zipper protein that is rapidly and highly induced in regenerating liver.</title>
        <authorList>
            <person name="Hsu J.-C."/>
            <person name="Laz T."/>
            <person name="Mohn K.L."/>
            <person name="Taub R."/>
        </authorList>
    </citation>
    <scope>NUCLEOTIDE SEQUENCE [MRNA]</scope>
    <scope>TISSUE SPECIFICITY</scope>
    <scope>INDUCTION</scope>
    <source>
        <strain>Fischer</strain>
        <tissue>Liver</tissue>
    </source>
</reference>
<reference key="2">
    <citation type="journal article" date="2004" name="Genome Res.">
        <title>The status, quality, and expansion of the NIH full-length cDNA project: the Mammalian Gene Collection (MGC).</title>
        <authorList>
            <consortium name="The MGC Project Team"/>
        </authorList>
    </citation>
    <scope>NUCLEOTIDE SEQUENCE [LARGE SCALE MRNA]</scope>
    <source>
        <tissue>Lung</tissue>
    </source>
</reference>
<reference key="3">
    <citation type="journal article" date="2010" name="Brain Res.">
        <title>Peripherin and ATF3 genes are differentially regulated in regenerating and non-regenerating primary sensory neurons.</title>
        <authorList>
            <person name="Reid A.J."/>
            <person name="Welin D."/>
            <person name="Wiberg M."/>
            <person name="Terenghi G."/>
            <person name="Novikov L.N."/>
        </authorList>
    </citation>
    <scope>TISSUE SPECIFICITY</scope>
    <scope>INDUCTION</scope>
</reference>
<gene>
    <name type="primary">Atf3</name>
    <name evidence="7" type="synonym">Lrf1</name>
</gene>
<name>ATF3_RAT</name>
<proteinExistence type="evidence at transcript level"/>
<sequence>MMLQHPGQVSASEVSATAIVPCLSPPGSLVFEDFANLTPFVKEELRFAIQNKHLCHRMSSALESVTINNRPLEMSVTKSEVAPEEDERKRRRRERNKIAAAKCRNKKKEKTECLQKESEKLESVNAELKAQIEELKNEKQHLIYMLNLHRPTCIVRAQNGRTPEDERNLFIQQIKEGTLQS</sequence>
<feature type="chain" id="PRO_0000076583" description="Cyclic AMP-dependent transcription factor ATF-3">
    <location>
        <begin position="1"/>
        <end position="181"/>
    </location>
</feature>
<feature type="domain" description="bZIP" evidence="3">
    <location>
        <begin position="86"/>
        <end position="149"/>
    </location>
</feature>
<feature type="region of interest" description="Disordered" evidence="4">
    <location>
        <begin position="76"/>
        <end position="96"/>
    </location>
</feature>
<feature type="region of interest" description="Basic motif" evidence="3">
    <location>
        <begin position="88"/>
        <end position="110"/>
    </location>
</feature>
<feature type="region of interest" description="Leucine-zipper" evidence="3">
    <location>
        <begin position="114"/>
        <end position="142"/>
    </location>
</feature>
<feature type="modified residue" description="Phosphothreonine" evidence="1">
    <location>
        <position position="162"/>
    </location>
</feature>
<feature type="cross-link" description="Glycyl lysine isopeptide (Lys-Gly) (interchain with G-Cter in SUMO2)" evidence="1">
    <location>
        <position position="78"/>
    </location>
</feature>
<feature type="cross-link" description="Glycyl lysine isopeptide (Lys-Gly) (interchain with G-Cter in SUMO2)" evidence="1">
    <location>
        <position position="175"/>
    </location>
</feature>
<dbReference type="EMBL" id="M63282">
    <property type="protein sequence ID" value="AAA41542.1"/>
    <property type="molecule type" value="mRNA"/>
</dbReference>
<dbReference type="EMBL" id="BC078903">
    <property type="protein sequence ID" value="AAH78903.1"/>
    <property type="molecule type" value="mRNA"/>
</dbReference>
<dbReference type="PIR" id="A39382">
    <property type="entry name" value="A39382"/>
</dbReference>
<dbReference type="RefSeq" id="NP_037044.1">
    <property type="nucleotide sequence ID" value="NM_012912.2"/>
</dbReference>
<dbReference type="RefSeq" id="XP_038946313.1">
    <property type="nucleotide sequence ID" value="XM_039090385.2"/>
</dbReference>
<dbReference type="SMR" id="P29596"/>
<dbReference type="CORUM" id="P29596"/>
<dbReference type="FunCoup" id="P29596">
    <property type="interactions" value="378"/>
</dbReference>
<dbReference type="STRING" id="10116.ENSRNOP00000071188"/>
<dbReference type="PhosphoSitePlus" id="P29596"/>
<dbReference type="PaxDb" id="10116-ENSRNOP00000005085"/>
<dbReference type="Ensembl" id="ENSRNOT00000005085.4">
    <property type="protein sequence ID" value="ENSRNOP00000005085.1"/>
    <property type="gene ID" value="ENSRNOG00000003745.4"/>
</dbReference>
<dbReference type="GeneID" id="25389"/>
<dbReference type="KEGG" id="rno:25389"/>
<dbReference type="AGR" id="RGD:2165"/>
<dbReference type="CTD" id="467"/>
<dbReference type="RGD" id="2165">
    <property type="gene designation" value="Atf3"/>
</dbReference>
<dbReference type="eggNOG" id="KOG1414">
    <property type="taxonomic scope" value="Eukaryota"/>
</dbReference>
<dbReference type="GeneTree" id="ENSGT00940000156376"/>
<dbReference type="InParanoid" id="P29596"/>
<dbReference type="OMA" id="KRECAPQ"/>
<dbReference type="OrthoDB" id="2596881at2759"/>
<dbReference type="PhylomeDB" id="P29596"/>
<dbReference type="TreeFam" id="TF326301"/>
<dbReference type="PRO" id="PR:P29596"/>
<dbReference type="Proteomes" id="UP000002494">
    <property type="component" value="Chromosome 13"/>
</dbReference>
<dbReference type="Bgee" id="ENSRNOG00000003745">
    <property type="expression patterns" value="Expressed in jejunum and 19 other cell types or tissues"/>
</dbReference>
<dbReference type="GO" id="GO:0005813">
    <property type="term" value="C:centrosome"/>
    <property type="evidence" value="ECO:0007669"/>
    <property type="project" value="Ensembl"/>
</dbReference>
<dbReference type="GO" id="GO:1990622">
    <property type="term" value="C:CHOP-ATF3 complex"/>
    <property type="evidence" value="ECO:0000266"/>
    <property type="project" value="RGD"/>
</dbReference>
<dbReference type="GO" id="GO:0036064">
    <property type="term" value="C:ciliary basal body"/>
    <property type="evidence" value="ECO:0007669"/>
    <property type="project" value="Ensembl"/>
</dbReference>
<dbReference type="GO" id="GO:0005794">
    <property type="term" value="C:Golgi apparatus"/>
    <property type="evidence" value="ECO:0007669"/>
    <property type="project" value="Ensembl"/>
</dbReference>
<dbReference type="GO" id="GO:0016604">
    <property type="term" value="C:nuclear body"/>
    <property type="evidence" value="ECO:0007669"/>
    <property type="project" value="Ensembl"/>
</dbReference>
<dbReference type="GO" id="GO:0005730">
    <property type="term" value="C:nucleolus"/>
    <property type="evidence" value="ECO:0007669"/>
    <property type="project" value="Ensembl"/>
</dbReference>
<dbReference type="GO" id="GO:0005634">
    <property type="term" value="C:nucleus"/>
    <property type="evidence" value="ECO:0000266"/>
    <property type="project" value="RGD"/>
</dbReference>
<dbReference type="GO" id="GO:0090575">
    <property type="term" value="C:RNA polymerase II transcription regulator complex"/>
    <property type="evidence" value="ECO:0000266"/>
    <property type="project" value="RGD"/>
</dbReference>
<dbReference type="GO" id="GO:0003677">
    <property type="term" value="F:DNA binding"/>
    <property type="evidence" value="ECO:0000266"/>
    <property type="project" value="RGD"/>
</dbReference>
<dbReference type="GO" id="GO:0001228">
    <property type="term" value="F:DNA-binding transcription activator activity, RNA polymerase II-specific"/>
    <property type="evidence" value="ECO:0000314"/>
    <property type="project" value="ARUK-UCL"/>
</dbReference>
<dbReference type="GO" id="GO:0003700">
    <property type="term" value="F:DNA-binding transcription factor activity"/>
    <property type="evidence" value="ECO:0000266"/>
    <property type="project" value="RGD"/>
</dbReference>
<dbReference type="GO" id="GO:0000981">
    <property type="term" value="F:DNA-binding transcription factor activity, RNA polymerase II-specific"/>
    <property type="evidence" value="ECO:0000318"/>
    <property type="project" value="GO_Central"/>
</dbReference>
<dbReference type="GO" id="GO:0001227">
    <property type="term" value="F:DNA-binding transcription repressor activity, RNA polymerase II-specific"/>
    <property type="evidence" value="ECO:0000266"/>
    <property type="project" value="RGD"/>
</dbReference>
<dbReference type="GO" id="GO:0042802">
    <property type="term" value="F:identical protein binding"/>
    <property type="evidence" value="ECO:0000266"/>
    <property type="project" value="RGD"/>
</dbReference>
<dbReference type="GO" id="GO:0046982">
    <property type="term" value="F:protein heterodimerization activity"/>
    <property type="evidence" value="ECO:0000266"/>
    <property type="project" value="RGD"/>
</dbReference>
<dbReference type="GO" id="GO:0042803">
    <property type="term" value="F:protein homodimerization activity"/>
    <property type="evidence" value="ECO:0000266"/>
    <property type="project" value="RGD"/>
</dbReference>
<dbReference type="GO" id="GO:0000978">
    <property type="term" value="F:RNA polymerase II cis-regulatory region sequence-specific DNA binding"/>
    <property type="evidence" value="ECO:0000314"/>
    <property type="project" value="ARUK-UCL"/>
</dbReference>
<dbReference type="GO" id="GO:0000977">
    <property type="term" value="F:RNA polymerase II transcription regulatory region sequence-specific DNA binding"/>
    <property type="evidence" value="ECO:0000266"/>
    <property type="project" value="RGD"/>
</dbReference>
<dbReference type="GO" id="GO:1990837">
    <property type="term" value="F:sequence-specific double-stranded DNA binding"/>
    <property type="evidence" value="ECO:0000266"/>
    <property type="project" value="RGD"/>
</dbReference>
<dbReference type="GO" id="GO:0000976">
    <property type="term" value="F:transcription cis-regulatory region binding"/>
    <property type="evidence" value="ECO:0000266"/>
    <property type="project" value="RGD"/>
</dbReference>
<dbReference type="GO" id="GO:0001709">
    <property type="term" value="P:cell fate determination"/>
    <property type="evidence" value="ECO:0000304"/>
    <property type="project" value="RGD"/>
</dbReference>
<dbReference type="GO" id="GO:0034198">
    <property type="term" value="P:cellular response to amino acid starvation"/>
    <property type="evidence" value="ECO:0000266"/>
    <property type="project" value="RGD"/>
</dbReference>
<dbReference type="GO" id="GO:0030968">
    <property type="term" value="P:endoplasmic reticulum unfolded protein response"/>
    <property type="evidence" value="ECO:0000266"/>
    <property type="project" value="RGD"/>
</dbReference>
<dbReference type="GO" id="GO:0006094">
    <property type="term" value="P:gluconeogenesis"/>
    <property type="evidence" value="ECO:0000266"/>
    <property type="project" value="RGD"/>
</dbReference>
<dbReference type="GO" id="GO:0045892">
    <property type="term" value="P:negative regulation of DNA-templated transcription"/>
    <property type="evidence" value="ECO:0000266"/>
    <property type="project" value="RGD"/>
</dbReference>
<dbReference type="GO" id="GO:0070373">
    <property type="term" value="P:negative regulation of ERK1 and ERK2 cascade"/>
    <property type="evidence" value="ECO:0000266"/>
    <property type="project" value="RGD"/>
</dbReference>
<dbReference type="GO" id="GO:0000122">
    <property type="term" value="P:negative regulation of transcription by RNA polymerase II"/>
    <property type="evidence" value="ECO:0000266"/>
    <property type="project" value="RGD"/>
</dbReference>
<dbReference type="GO" id="GO:0008284">
    <property type="term" value="P:positive regulation of cell population proliferation"/>
    <property type="evidence" value="ECO:0000315"/>
    <property type="project" value="RGD"/>
</dbReference>
<dbReference type="GO" id="GO:0010628">
    <property type="term" value="P:positive regulation of gene expression"/>
    <property type="evidence" value="ECO:0000266"/>
    <property type="project" value="RGD"/>
</dbReference>
<dbReference type="GO" id="GO:1903984">
    <property type="term" value="P:positive regulation of TRAIL-activated apoptotic signaling pathway"/>
    <property type="evidence" value="ECO:0000266"/>
    <property type="project" value="RGD"/>
</dbReference>
<dbReference type="GO" id="GO:0045944">
    <property type="term" value="P:positive regulation of transcription by RNA polymerase II"/>
    <property type="evidence" value="ECO:0000314"/>
    <property type="project" value="ARUK-UCL"/>
</dbReference>
<dbReference type="GO" id="GO:0006357">
    <property type="term" value="P:regulation of transcription by RNA polymerase II"/>
    <property type="evidence" value="ECO:0000266"/>
    <property type="project" value="RGD"/>
</dbReference>
<dbReference type="GO" id="GO:0034976">
    <property type="term" value="P:response to endoplasmic reticulum stress"/>
    <property type="evidence" value="ECO:0000266"/>
    <property type="project" value="RGD"/>
</dbReference>
<dbReference type="GO" id="GO:0035914">
    <property type="term" value="P:skeletal muscle cell differentiation"/>
    <property type="evidence" value="ECO:0000266"/>
    <property type="project" value="RGD"/>
</dbReference>
<dbReference type="CDD" id="cd14722">
    <property type="entry name" value="bZIP_ATF3"/>
    <property type="match status" value="1"/>
</dbReference>
<dbReference type="FunFam" id="1.20.5.170:FF:000006">
    <property type="entry name" value="fos-related antigen 2 isoform X1"/>
    <property type="match status" value="1"/>
</dbReference>
<dbReference type="Gene3D" id="1.20.5.170">
    <property type="match status" value="1"/>
</dbReference>
<dbReference type="InterPro" id="IPR000837">
    <property type="entry name" value="AP-1"/>
</dbReference>
<dbReference type="InterPro" id="IPR004827">
    <property type="entry name" value="bZIP"/>
</dbReference>
<dbReference type="InterPro" id="IPR046347">
    <property type="entry name" value="bZIP_sf"/>
</dbReference>
<dbReference type="PANTHER" id="PTHR23351:SF23">
    <property type="entry name" value="CYCLIC AMP-DEPENDENT TRANSCRIPTION FACTOR ATF-3"/>
    <property type="match status" value="1"/>
</dbReference>
<dbReference type="PANTHER" id="PTHR23351">
    <property type="entry name" value="FOS TRANSCRIPTION FACTOR-RELATED"/>
    <property type="match status" value="1"/>
</dbReference>
<dbReference type="Pfam" id="PF00170">
    <property type="entry name" value="bZIP_1"/>
    <property type="match status" value="1"/>
</dbReference>
<dbReference type="PRINTS" id="PR00042">
    <property type="entry name" value="LEUZIPPRFOS"/>
</dbReference>
<dbReference type="SMART" id="SM00338">
    <property type="entry name" value="BRLZ"/>
    <property type="match status" value="1"/>
</dbReference>
<dbReference type="SUPFAM" id="SSF57959">
    <property type="entry name" value="Leucine zipper domain"/>
    <property type="match status" value="1"/>
</dbReference>
<dbReference type="PROSITE" id="PS50217">
    <property type="entry name" value="BZIP"/>
    <property type="match status" value="1"/>
</dbReference>
<dbReference type="PROSITE" id="PS00036">
    <property type="entry name" value="BZIP_BASIC"/>
    <property type="match status" value="1"/>
</dbReference>
<accession>P29596</accession>
<protein>
    <recommendedName>
        <fullName>Cyclic AMP-dependent transcription factor ATF-3</fullName>
        <shortName>cAMP-dependent transcription factor ATF-3</shortName>
    </recommendedName>
    <alternativeName>
        <fullName>Activating transcription factor 3</fullName>
    </alternativeName>
    <alternativeName>
        <fullName evidence="7">Liver regeneration factor 1</fullName>
        <shortName evidence="7">LRF-1</shortName>
    </alternativeName>
</protein>